<gene>
    <name evidence="1" type="primary">tyrS</name>
    <name type="ordered locus">HDEF_0671</name>
</gene>
<comment type="function">
    <text evidence="1">Catalyzes the attachment of tyrosine to tRNA(Tyr) in a two-step reaction: tyrosine is first activated by ATP to form Tyr-AMP and then transferred to the acceptor end of tRNA(Tyr).</text>
</comment>
<comment type="catalytic activity">
    <reaction evidence="1">
        <text>tRNA(Tyr) + L-tyrosine + ATP = L-tyrosyl-tRNA(Tyr) + AMP + diphosphate + H(+)</text>
        <dbReference type="Rhea" id="RHEA:10220"/>
        <dbReference type="Rhea" id="RHEA-COMP:9706"/>
        <dbReference type="Rhea" id="RHEA-COMP:9707"/>
        <dbReference type="ChEBI" id="CHEBI:15378"/>
        <dbReference type="ChEBI" id="CHEBI:30616"/>
        <dbReference type="ChEBI" id="CHEBI:33019"/>
        <dbReference type="ChEBI" id="CHEBI:58315"/>
        <dbReference type="ChEBI" id="CHEBI:78442"/>
        <dbReference type="ChEBI" id="CHEBI:78536"/>
        <dbReference type="ChEBI" id="CHEBI:456215"/>
        <dbReference type="EC" id="6.1.1.1"/>
    </reaction>
</comment>
<comment type="subunit">
    <text evidence="1">Homodimer.</text>
</comment>
<comment type="subcellular location">
    <subcellularLocation>
        <location evidence="1">Cytoplasm</location>
    </subcellularLocation>
</comment>
<comment type="similarity">
    <text evidence="1">Belongs to the class-I aminoacyl-tRNA synthetase family. TyrS type 1 subfamily.</text>
</comment>
<accession>C4K4B6</accession>
<keyword id="KW-0030">Aminoacyl-tRNA synthetase</keyword>
<keyword id="KW-0067">ATP-binding</keyword>
<keyword id="KW-0963">Cytoplasm</keyword>
<keyword id="KW-0436">Ligase</keyword>
<keyword id="KW-0547">Nucleotide-binding</keyword>
<keyword id="KW-0648">Protein biosynthesis</keyword>
<keyword id="KW-0694">RNA-binding</keyword>
<reference key="1">
    <citation type="journal article" date="2009" name="Proc. Natl. Acad. Sci. U.S.A.">
        <title>Hamiltonella defensa, genome evolution of protective bacterial endosymbiont from pathogenic ancestors.</title>
        <authorList>
            <person name="Degnan P.H."/>
            <person name="Yu Y."/>
            <person name="Sisneros N."/>
            <person name="Wing R.A."/>
            <person name="Moran N.A."/>
        </authorList>
    </citation>
    <scope>NUCLEOTIDE SEQUENCE [LARGE SCALE GENOMIC DNA]</scope>
    <source>
        <strain>5AT</strain>
    </source>
</reference>
<proteinExistence type="inferred from homology"/>
<name>SYY_HAMD5</name>
<evidence type="ECO:0000255" key="1">
    <source>
        <dbReference type="HAMAP-Rule" id="MF_02006"/>
    </source>
</evidence>
<organism>
    <name type="scientific">Hamiltonella defensa subsp. Acyrthosiphon pisum (strain 5AT)</name>
    <dbReference type="NCBI Taxonomy" id="572265"/>
    <lineage>
        <taxon>Bacteria</taxon>
        <taxon>Pseudomonadati</taxon>
        <taxon>Pseudomonadota</taxon>
        <taxon>Gammaproteobacteria</taxon>
        <taxon>Enterobacterales</taxon>
        <taxon>Enterobacteriaceae</taxon>
        <taxon>aphid secondary symbionts</taxon>
        <taxon>Candidatus Hamiltonella</taxon>
    </lineage>
</organism>
<protein>
    <recommendedName>
        <fullName evidence="1">Tyrosine--tRNA ligase</fullName>
        <ecNumber evidence="1">6.1.1.1</ecNumber>
    </recommendedName>
    <alternativeName>
        <fullName evidence="1">Tyrosyl-tRNA synthetase</fullName>
        <shortName evidence="1">TyrRS</shortName>
    </alternativeName>
</protein>
<dbReference type="EC" id="6.1.1.1" evidence="1"/>
<dbReference type="EMBL" id="CP001277">
    <property type="protein sequence ID" value="ACQ67409.1"/>
    <property type="molecule type" value="Genomic_DNA"/>
</dbReference>
<dbReference type="RefSeq" id="WP_015873230.1">
    <property type="nucleotide sequence ID" value="NC_012751.1"/>
</dbReference>
<dbReference type="SMR" id="C4K4B6"/>
<dbReference type="STRING" id="572265.HDEF_0671"/>
<dbReference type="GeneID" id="66260530"/>
<dbReference type="KEGG" id="hde:HDEF_0671"/>
<dbReference type="eggNOG" id="COG0162">
    <property type="taxonomic scope" value="Bacteria"/>
</dbReference>
<dbReference type="HOGENOM" id="CLU_024003_0_3_6"/>
<dbReference type="Proteomes" id="UP000002334">
    <property type="component" value="Chromosome"/>
</dbReference>
<dbReference type="GO" id="GO:0005829">
    <property type="term" value="C:cytosol"/>
    <property type="evidence" value="ECO:0007669"/>
    <property type="project" value="TreeGrafter"/>
</dbReference>
<dbReference type="GO" id="GO:0005524">
    <property type="term" value="F:ATP binding"/>
    <property type="evidence" value="ECO:0007669"/>
    <property type="project" value="UniProtKB-UniRule"/>
</dbReference>
<dbReference type="GO" id="GO:0003723">
    <property type="term" value="F:RNA binding"/>
    <property type="evidence" value="ECO:0007669"/>
    <property type="project" value="UniProtKB-KW"/>
</dbReference>
<dbReference type="GO" id="GO:0004831">
    <property type="term" value="F:tyrosine-tRNA ligase activity"/>
    <property type="evidence" value="ECO:0007669"/>
    <property type="project" value="UniProtKB-UniRule"/>
</dbReference>
<dbReference type="GO" id="GO:0006437">
    <property type="term" value="P:tyrosyl-tRNA aminoacylation"/>
    <property type="evidence" value="ECO:0007669"/>
    <property type="project" value="UniProtKB-UniRule"/>
</dbReference>
<dbReference type="CDD" id="cd00165">
    <property type="entry name" value="S4"/>
    <property type="match status" value="1"/>
</dbReference>
<dbReference type="CDD" id="cd00805">
    <property type="entry name" value="TyrRS_core"/>
    <property type="match status" value="1"/>
</dbReference>
<dbReference type="FunFam" id="1.10.240.10:FF:000001">
    <property type="entry name" value="Tyrosine--tRNA ligase"/>
    <property type="match status" value="1"/>
</dbReference>
<dbReference type="FunFam" id="3.40.50.620:FF:000008">
    <property type="entry name" value="Tyrosine--tRNA ligase"/>
    <property type="match status" value="1"/>
</dbReference>
<dbReference type="Gene3D" id="3.40.50.620">
    <property type="entry name" value="HUPs"/>
    <property type="match status" value="1"/>
</dbReference>
<dbReference type="Gene3D" id="3.10.290.10">
    <property type="entry name" value="RNA-binding S4 domain"/>
    <property type="match status" value="1"/>
</dbReference>
<dbReference type="Gene3D" id="1.10.240.10">
    <property type="entry name" value="Tyrosyl-Transfer RNA Synthetase"/>
    <property type="match status" value="1"/>
</dbReference>
<dbReference type="HAMAP" id="MF_02006">
    <property type="entry name" value="Tyr_tRNA_synth_type1"/>
    <property type="match status" value="1"/>
</dbReference>
<dbReference type="InterPro" id="IPR001412">
    <property type="entry name" value="aa-tRNA-synth_I_CS"/>
</dbReference>
<dbReference type="InterPro" id="IPR002305">
    <property type="entry name" value="aa-tRNA-synth_Ic"/>
</dbReference>
<dbReference type="InterPro" id="IPR014729">
    <property type="entry name" value="Rossmann-like_a/b/a_fold"/>
</dbReference>
<dbReference type="InterPro" id="IPR002942">
    <property type="entry name" value="S4_RNA-bd"/>
</dbReference>
<dbReference type="InterPro" id="IPR036986">
    <property type="entry name" value="S4_RNA-bd_sf"/>
</dbReference>
<dbReference type="InterPro" id="IPR054608">
    <property type="entry name" value="SYY-like_C"/>
</dbReference>
<dbReference type="InterPro" id="IPR002307">
    <property type="entry name" value="Tyr-tRNA-ligase"/>
</dbReference>
<dbReference type="InterPro" id="IPR024088">
    <property type="entry name" value="Tyr-tRNA-ligase_bac-type"/>
</dbReference>
<dbReference type="InterPro" id="IPR024107">
    <property type="entry name" value="Tyr-tRNA-ligase_bac_1"/>
</dbReference>
<dbReference type="NCBIfam" id="TIGR00234">
    <property type="entry name" value="tyrS"/>
    <property type="match status" value="1"/>
</dbReference>
<dbReference type="PANTHER" id="PTHR11766:SF0">
    <property type="entry name" value="TYROSINE--TRNA LIGASE, MITOCHONDRIAL"/>
    <property type="match status" value="1"/>
</dbReference>
<dbReference type="PANTHER" id="PTHR11766">
    <property type="entry name" value="TYROSYL-TRNA SYNTHETASE"/>
    <property type="match status" value="1"/>
</dbReference>
<dbReference type="Pfam" id="PF22421">
    <property type="entry name" value="SYY_C-terminal"/>
    <property type="match status" value="1"/>
</dbReference>
<dbReference type="Pfam" id="PF00579">
    <property type="entry name" value="tRNA-synt_1b"/>
    <property type="match status" value="1"/>
</dbReference>
<dbReference type="PRINTS" id="PR01040">
    <property type="entry name" value="TRNASYNTHTYR"/>
</dbReference>
<dbReference type="SMART" id="SM00363">
    <property type="entry name" value="S4"/>
    <property type="match status" value="1"/>
</dbReference>
<dbReference type="SUPFAM" id="SSF55174">
    <property type="entry name" value="Alpha-L RNA-binding motif"/>
    <property type="match status" value="1"/>
</dbReference>
<dbReference type="SUPFAM" id="SSF52374">
    <property type="entry name" value="Nucleotidylyl transferase"/>
    <property type="match status" value="1"/>
</dbReference>
<dbReference type="PROSITE" id="PS00178">
    <property type="entry name" value="AA_TRNA_LIGASE_I"/>
    <property type="match status" value="1"/>
</dbReference>
<dbReference type="PROSITE" id="PS50889">
    <property type="entry name" value="S4"/>
    <property type="match status" value="1"/>
</dbReference>
<feature type="chain" id="PRO_1000216275" description="Tyrosine--tRNA ligase">
    <location>
        <begin position="1"/>
        <end position="424"/>
    </location>
</feature>
<feature type="domain" description="S4 RNA-binding" evidence="1">
    <location>
        <begin position="357"/>
        <end position="414"/>
    </location>
</feature>
<feature type="short sequence motif" description="'HIGH' region">
    <location>
        <begin position="42"/>
        <end position="51"/>
    </location>
</feature>
<feature type="short sequence motif" description="'KMSKS' region">
    <location>
        <begin position="235"/>
        <end position="239"/>
    </location>
</feature>
<feature type="binding site" evidence="1">
    <location>
        <position position="37"/>
    </location>
    <ligand>
        <name>L-tyrosine</name>
        <dbReference type="ChEBI" id="CHEBI:58315"/>
    </ligand>
</feature>
<feature type="binding site" evidence="1">
    <location>
        <position position="175"/>
    </location>
    <ligand>
        <name>L-tyrosine</name>
        <dbReference type="ChEBI" id="CHEBI:58315"/>
    </ligand>
</feature>
<feature type="binding site" evidence="1">
    <location>
        <position position="179"/>
    </location>
    <ligand>
        <name>L-tyrosine</name>
        <dbReference type="ChEBI" id="CHEBI:58315"/>
    </ligand>
</feature>
<feature type="binding site" evidence="1">
    <location>
        <position position="238"/>
    </location>
    <ligand>
        <name>ATP</name>
        <dbReference type="ChEBI" id="CHEBI:30616"/>
    </ligand>
</feature>
<sequence>MISNNLIEQLEQRGLIAQVTDKTRLSERLYQGQISLYCGFDPTADSLHLGHLVPLLCLKRFQLVGHKPIILVGGATGLIGDPSFKAGERKLNDIDTVHQWVNKIREQVEPFLDFDCGNHSATIENNHNWFSHINVLTFLRDIGKHFSVNQMMNKEAVKQRLSRTDSGISFTEFSYNLLQSYDFAYLNKNHKVELQIGGSDQWGNITSGIDLTHRLNRRSVYGLTVPLITKADGSKFGKTEGNTIWLDAKKTSPYQFYQFWLNTADADVYRFLKLFTFIDLNAIDALEEQDKKNDKAPQAQYVLANEITEMVHGKEGLSAAQRITASLFTGNPHDMREEDFSQLAQDGIPIVRLETDAELQKALVSAQLAPSRSQARTLIQSSSISVNGKKQLKPEYIFTSEDRLLDRYTLLRRGKKYYCLIIWQ</sequence>